<protein>
    <recommendedName>
        <fullName evidence="1">Large ribosomal subunit protein bL35</fullName>
    </recommendedName>
    <alternativeName>
        <fullName evidence="2">50S ribosomal protein L35</fullName>
    </alternativeName>
</protein>
<name>RL35_STRAW</name>
<comment type="similarity">
    <text evidence="1">Belongs to the bacterial ribosomal protein bL35 family.</text>
</comment>
<feature type="chain" id="PRO_0000177429" description="Large ribosomal subunit protein bL35">
    <location>
        <begin position="1"/>
        <end position="64"/>
    </location>
</feature>
<keyword id="KW-1185">Reference proteome</keyword>
<keyword id="KW-0687">Ribonucleoprotein</keyword>
<keyword id="KW-0689">Ribosomal protein</keyword>
<accession>Q828D1</accession>
<dbReference type="EMBL" id="BA000030">
    <property type="protein sequence ID" value="BAC74449.1"/>
    <property type="molecule type" value="Genomic_DNA"/>
</dbReference>
<dbReference type="RefSeq" id="WP_007829094.1">
    <property type="nucleotide sequence ID" value="NZ_JZJK01000082.1"/>
</dbReference>
<dbReference type="SMR" id="Q828D1"/>
<dbReference type="GeneID" id="93996677"/>
<dbReference type="KEGG" id="sma:SAVERM_6738"/>
<dbReference type="eggNOG" id="COG0291">
    <property type="taxonomic scope" value="Bacteria"/>
</dbReference>
<dbReference type="HOGENOM" id="CLU_169643_4_2_11"/>
<dbReference type="OrthoDB" id="9804851at2"/>
<dbReference type="Proteomes" id="UP000000428">
    <property type="component" value="Chromosome"/>
</dbReference>
<dbReference type="GO" id="GO:0022625">
    <property type="term" value="C:cytosolic large ribosomal subunit"/>
    <property type="evidence" value="ECO:0007669"/>
    <property type="project" value="TreeGrafter"/>
</dbReference>
<dbReference type="GO" id="GO:0003735">
    <property type="term" value="F:structural constituent of ribosome"/>
    <property type="evidence" value="ECO:0007669"/>
    <property type="project" value="InterPro"/>
</dbReference>
<dbReference type="GO" id="GO:0006412">
    <property type="term" value="P:translation"/>
    <property type="evidence" value="ECO:0007669"/>
    <property type="project" value="UniProtKB-UniRule"/>
</dbReference>
<dbReference type="FunFam" id="4.10.410.60:FF:000001">
    <property type="entry name" value="50S ribosomal protein L35"/>
    <property type="match status" value="1"/>
</dbReference>
<dbReference type="Gene3D" id="4.10.410.60">
    <property type="match status" value="1"/>
</dbReference>
<dbReference type="HAMAP" id="MF_00514">
    <property type="entry name" value="Ribosomal_bL35"/>
    <property type="match status" value="1"/>
</dbReference>
<dbReference type="InterPro" id="IPR001706">
    <property type="entry name" value="Ribosomal_bL35"/>
</dbReference>
<dbReference type="InterPro" id="IPR021137">
    <property type="entry name" value="Ribosomal_bL35-like"/>
</dbReference>
<dbReference type="InterPro" id="IPR018265">
    <property type="entry name" value="Ribosomal_bL35_CS"/>
</dbReference>
<dbReference type="InterPro" id="IPR037229">
    <property type="entry name" value="Ribosomal_bL35_sf"/>
</dbReference>
<dbReference type="NCBIfam" id="TIGR00001">
    <property type="entry name" value="rpmI_bact"/>
    <property type="match status" value="1"/>
</dbReference>
<dbReference type="PANTHER" id="PTHR33343">
    <property type="entry name" value="54S RIBOSOMAL PROTEIN BL35M"/>
    <property type="match status" value="1"/>
</dbReference>
<dbReference type="PANTHER" id="PTHR33343:SF1">
    <property type="entry name" value="LARGE RIBOSOMAL SUBUNIT PROTEIN BL35M"/>
    <property type="match status" value="1"/>
</dbReference>
<dbReference type="Pfam" id="PF01632">
    <property type="entry name" value="Ribosomal_L35p"/>
    <property type="match status" value="1"/>
</dbReference>
<dbReference type="PRINTS" id="PR00064">
    <property type="entry name" value="RIBOSOMALL35"/>
</dbReference>
<dbReference type="SUPFAM" id="SSF143034">
    <property type="entry name" value="L35p-like"/>
    <property type="match status" value="1"/>
</dbReference>
<dbReference type="PROSITE" id="PS00936">
    <property type="entry name" value="RIBOSOMAL_L35"/>
    <property type="match status" value="1"/>
</dbReference>
<organism>
    <name type="scientific">Streptomyces avermitilis (strain ATCC 31267 / DSM 46492 / JCM 5070 / NBRC 14893 / NCIMB 12804 / NRRL 8165 / MA-4680)</name>
    <dbReference type="NCBI Taxonomy" id="227882"/>
    <lineage>
        <taxon>Bacteria</taxon>
        <taxon>Bacillati</taxon>
        <taxon>Actinomycetota</taxon>
        <taxon>Actinomycetes</taxon>
        <taxon>Kitasatosporales</taxon>
        <taxon>Streptomycetaceae</taxon>
        <taxon>Streptomyces</taxon>
    </lineage>
</organism>
<sequence>MPKNKSHSGASKRFKVTGSGKVLRERAGKRHLLEHKSSRLTRRLTGNAEMAPGDAKKIKKLLGK</sequence>
<reference key="1">
    <citation type="journal article" date="2001" name="Proc. Natl. Acad. Sci. U.S.A.">
        <title>Genome sequence of an industrial microorganism Streptomyces avermitilis: deducing the ability of producing secondary metabolites.</title>
        <authorList>
            <person name="Omura S."/>
            <person name="Ikeda H."/>
            <person name="Ishikawa J."/>
            <person name="Hanamoto A."/>
            <person name="Takahashi C."/>
            <person name="Shinose M."/>
            <person name="Takahashi Y."/>
            <person name="Horikawa H."/>
            <person name="Nakazawa H."/>
            <person name="Osonoe T."/>
            <person name="Kikuchi H."/>
            <person name="Shiba T."/>
            <person name="Sakaki Y."/>
            <person name="Hattori M."/>
        </authorList>
    </citation>
    <scope>NUCLEOTIDE SEQUENCE [LARGE SCALE GENOMIC DNA]</scope>
    <source>
        <strain>ATCC 31267 / DSM 46492 / JCM 5070 / NBRC 14893 / NCIMB 12804 / NRRL 8165 / MA-4680</strain>
    </source>
</reference>
<reference key="2">
    <citation type="journal article" date="2003" name="Nat. Biotechnol.">
        <title>Complete genome sequence and comparative analysis of the industrial microorganism Streptomyces avermitilis.</title>
        <authorList>
            <person name="Ikeda H."/>
            <person name="Ishikawa J."/>
            <person name="Hanamoto A."/>
            <person name="Shinose M."/>
            <person name="Kikuchi H."/>
            <person name="Shiba T."/>
            <person name="Sakaki Y."/>
            <person name="Hattori M."/>
            <person name="Omura S."/>
        </authorList>
    </citation>
    <scope>NUCLEOTIDE SEQUENCE [LARGE SCALE GENOMIC DNA]</scope>
    <source>
        <strain>ATCC 31267 / DSM 46492 / JCM 5070 / NBRC 14893 / NCIMB 12804 / NRRL 8165 / MA-4680</strain>
    </source>
</reference>
<proteinExistence type="inferred from homology"/>
<gene>
    <name evidence="1" type="primary">rpmI</name>
    <name type="ordered locus">SAV_6738</name>
</gene>
<evidence type="ECO:0000255" key="1">
    <source>
        <dbReference type="HAMAP-Rule" id="MF_00514"/>
    </source>
</evidence>
<evidence type="ECO:0000305" key="2"/>